<gene>
    <name type="primary">polr2b</name>
    <name type="synonym">rpb2</name>
    <name type="ORF">DDB_G0288257</name>
</gene>
<reference key="1">
    <citation type="journal article" date="2005" name="Nature">
        <title>The genome of the social amoeba Dictyostelium discoideum.</title>
        <authorList>
            <person name="Eichinger L."/>
            <person name="Pachebat J.A."/>
            <person name="Gloeckner G."/>
            <person name="Rajandream M.A."/>
            <person name="Sucgang R."/>
            <person name="Berriman M."/>
            <person name="Song J."/>
            <person name="Olsen R."/>
            <person name="Szafranski K."/>
            <person name="Xu Q."/>
            <person name="Tunggal B."/>
            <person name="Kummerfeld S."/>
            <person name="Madera M."/>
            <person name="Konfortov B.A."/>
            <person name="Rivero F."/>
            <person name="Bankier A.T."/>
            <person name="Lehmann R."/>
            <person name="Hamlin N."/>
            <person name="Davies R."/>
            <person name="Gaudet P."/>
            <person name="Fey P."/>
            <person name="Pilcher K."/>
            <person name="Chen G."/>
            <person name="Saunders D."/>
            <person name="Sodergren E.J."/>
            <person name="Davis P."/>
            <person name="Kerhornou A."/>
            <person name="Nie X."/>
            <person name="Hall N."/>
            <person name="Anjard C."/>
            <person name="Hemphill L."/>
            <person name="Bason N."/>
            <person name="Farbrother P."/>
            <person name="Desany B."/>
            <person name="Just E."/>
            <person name="Morio T."/>
            <person name="Rost R."/>
            <person name="Churcher C.M."/>
            <person name="Cooper J."/>
            <person name="Haydock S."/>
            <person name="van Driessche N."/>
            <person name="Cronin A."/>
            <person name="Goodhead I."/>
            <person name="Muzny D.M."/>
            <person name="Mourier T."/>
            <person name="Pain A."/>
            <person name="Lu M."/>
            <person name="Harper D."/>
            <person name="Lindsay R."/>
            <person name="Hauser H."/>
            <person name="James K.D."/>
            <person name="Quiles M."/>
            <person name="Madan Babu M."/>
            <person name="Saito T."/>
            <person name="Buchrieser C."/>
            <person name="Wardroper A."/>
            <person name="Felder M."/>
            <person name="Thangavelu M."/>
            <person name="Johnson D."/>
            <person name="Knights A."/>
            <person name="Loulseged H."/>
            <person name="Mungall K.L."/>
            <person name="Oliver K."/>
            <person name="Price C."/>
            <person name="Quail M.A."/>
            <person name="Urushihara H."/>
            <person name="Hernandez J."/>
            <person name="Rabbinowitsch E."/>
            <person name="Steffen D."/>
            <person name="Sanders M."/>
            <person name="Ma J."/>
            <person name="Kohara Y."/>
            <person name="Sharp S."/>
            <person name="Simmonds M.N."/>
            <person name="Spiegler S."/>
            <person name="Tivey A."/>
            <person name="Sugano S."/>
            <person name="White B."/>
            <person name="Walker D."/>
            <person name="Woodward J.R."/>
            <person name="Winckler T."/>
            <person name="Tanaka Y."/>
            <person name="Shaulsky G."/>
            <person name="Schleicher M."/>
            <person name="Weinstock G.M."/>
            <person name="Rosenthal A."/>
            <person name="Cox E.C."/>
            <person name="Chisholm R.L."/>
            <person name="Gibbs R.A."/>
            <person name="Loomis W.F."/>
            <person name="Platzer M."/>
            <person name="Kay R.R."/>
            <person name="Williams J.G."/>
            <person name="Dear P.H."/>
            <person name="Noegel A.A."/>
            <person name="Barrell B.G."/>
            <person name="Kuspa A."/>
        </authorList>
    </citation>
    <scope>NUCLEOTIDE SEQUENCE [LARGE SCALE GENOMIC DNA]</scope>
    <source>
        <strain>AX4</strain>
    </source>
</reference>
<accession>Q54J75</accession>
<protein>
    <recommendedName>
        <fullName>DNA-directed RNA polymerase II subunit rpb2</fullName>
        <shortName>RNA polymerase II subunit 2</shortName>
        <shortName>RNA polymerase II subunit B2</shortName>
        <ecNumber>2.7.7.6</ecNumber>
    </recommendedName>
</protein>
<proteinExistence type="inferred from homology"/>
<name>RPB2_DICDI</name>
<dbReference type="EC" id="2.7.7.6"/>
<dbReference type="EMBL" id="AAFI02000109">
    <property type="protein sequence ID" value="EAL63310.1"/>
    <property type="molecule type" value="Genomic_DNA"/>
</dbReference>
<dbReference type="RefSeq" id="XP_636812.1">
    <property type="nucleotide sequence ID" value="XM_631720.1"/>
</dbReference>
<dbReference type="SMR" id="Q54J75"/>
<dbReference type="FunCoup" id="Q54J75">
    <property type="interactions" value="480"/>
</dbReference>
<dbReference type="STRING" id="44689.Q54J75"/>
<dbReference type="PaxDb" id="44689-DDB0216277"/>
<dbReference type="EnsemblProtists" id="EAL63310">
    <property type="protein sequence ID" value="EAL63310"/>
    <property type="gene ID" value="DDB_G0288257"/>
</dbReference>
<dbReference type="GeneID" id="8626529"/>
<dbReference type="KEGG" id="ddi:DDB_G0288257"/>
<dbReference type="dictyBase" id="DDB_G0288257">
    <property type="gene designation" value="rpb2"/>
</dbReference>
<dbReference type="VEuPathDB" id="AmoebaDB:DDB_G0288257"/>
<dbReference type="eggNOG" id="KOG0214">
    <property type="taxonomic scope" value="Eukaryota"/>
</dbReference>
<dbReference type="HOGENOM" id="CLU_000524_5_2_1"/>
<dbReference type="InParanoid" id="Q54J75"/>
<dbReference type="OMA" id="CYDRNDS"/>
<dbReference type="PhylomeDB" id="Q54J75"/>
<dbReference type="Reactome" id="R-DDI-113418">
    <property type="pathway name" value="Formation of the Early Elongation Complex"/>
</dbReference>
<dbReference type="Reactome" id="R-DDI-674695">
    <property type="pathway name" value="RNA Polymerase II Pre-transcription Events"/>
</dbReference>
<dbReference type="Reactome" id="R-DDI-6781823">
    <property type="pathway name" value="Formation of TC-NER Pre-Incision Complex"/>
</dbReference>
<dbReference type="Reactome" id="R-DDI-6782135">
    <property type="pathway name" value="Dual incision in TC-NER"/>
</dbReference>
<dbReference type="Reactome" id="R-DDI-6782210">
    <property type="pathway name" value="Gap-filling DNA repair synthesis and ligation in TC-NER"/>
</dbReference>
<dbReference type="Reactome" id="R-DDI-6796648">
    <property type="pathway name" value="TP53 Regulates Transcription of DNA Repair Genes"/>
</dbReference>
<dbReference type="Reactome" id="R-DDI-6807505">
    <property type="pathway name" value="RNA polymerase II transcribes snRNA genes"/>
</dbReference>
<dbReference type="Reactome" id="R-DDI-72086">
    <property type="pathway name" value="mRNA Capping"/>
</dbReference>
<dbReference type="Reactome" id="R-DDI-72163">
    <property type="pathway name" value="mRNA Splicing - Major Pathway"/>
</dbReference>
<dbReference type="Reactome" id="R-DDI-72203">
    <property type="pathway name" value="Processing of Capped Intron-Containing Pre-mRNA"/>
</dbReference>
<dbReference type="Reactome" id="R-DDI-73776">
    <property type="pathway name" value="RNA Polymerase II Promoter Escape"/>
</dbReference>
<dbReference type="Reactome" id="R-DDI-73779">
    <property type="pathway name" value="RNA Polymerase II Transcription Pre-Initiation And Promoter Opening"/>
</dbReference>
<dbReference type="Reactome" id="R-DDI-75953">
    <property type="pathway name" value="RNA Polymerase II Transcription Initiation"/>
</dbReference>
<dbReference type="Reactome" id="R-DDI-76042">
    <property type="pathway name" value="RNA Polymerase II Transcription Initiation And Promoter Clearance"/>
</dbReference>
<dbReference type="Reactome" id="R-DDI-77075">
    <property type="pathway name" value="RNA Pol II CTD phosphorylation and interaction with CE"/>
</dbReference>
<dbReference type="Reactome" id="R-DDI-9018519">
    <property type="pathway name" value="Estrogen-dependent gene expression"/>
</dbReference>
<dbReference type="PRO" id="PR:Q54J75"/>
<dbReference type="Proteomes" id="UP000002195">
    <property type="component" value="Chromosome 5"/>
</dbReference>
<dbReference type="GO" id="GO:0005739">
    <property type="term" value="C:mitochondrion"/>
    <property type="evidence" value="ECO:0007669"/>
    <property type="project" value="GOC"/>
</dbReference>
<dbReference type="GO" id="GO:0005665">
    <property type="term" value="C:RNA polymerase II, core complex"/>
    <property type="evidence" value="ECO:0000250"/>
    <property type="project" value="dictyBase"/>
</dbReference>
<dbReference type="GO" id="GO:0003677">
    <property type="term" value="F:DNA binding"/>
    <property type="evidence" value="ECO:0007669"/>
    <property type="project" value="InterPro"/>
</dbReference>
<dbReference type="GO" id="GO:0003899">
    <property type="term" value="F:DNA-directed RNA polymerase activity"/>
    <property type="evidence" value="ECO:0000250"/>
    <property type="project" value="dictyBase"/>
</dbReference>
<dbReference type="GO" id="GO:0032549">
    <property type="term" value="F:ribonucleoside binding"/>
    <property type="evidence" value="ECO:0007669"/>
    <property type="project" value="InterPro"/>
</dbReference>
<dbReference type="GO" id="GO:0008270">
    <property type="term" value="F:zinc ion binding"/>
    <property type="evidence" value="ECO:0007669"/>
    <property type="project" value="UniProtKB-KW"/>
</dbReference>
<dbReference type="GO" id="GO:0006366">
    <property type="term" value="P:transcription by RNA polymerase II"/>
    <property type="evidence" value="ECO:0000250"/>
    <property type="project" value="dictyBase"/>
</dbReference>
<dbReference type="CDD" id="cd00653">
    <property type="entry name" value="RNA_pol_B_RPB2"/>
    <property type="match status" value="1"/>
</dbReference>
<dbReference type="FunFam" id="2.40.270.10:FF:000011">
    <property type="entry name" value="DNA-directed RNA polymerase subunit beta"/>
    <property type="match status" value="1"/>
</dbReference>
<dbReference type="FunFam" id="2.40.50.150:FF:000002">
    <property type="entry name" value="DNA-directed RNA polymerase subunit beta"/>
    <property type="match status" value="1"/>
</dbReference>
<dbReference type="FunFam" id="3.90.1070.20:FF:000001">
    <property type="entry name" value="DNA-directed RNA polymerase subunit beta"/>
    <property type="match status" value="1"/>
</dbReference>
<dbReference type="FunFam" id="3.90.1100.10:FF:000003">
    <property type="entry name" value="DNA-directed RNA polymerase subunit beta"/>
    <property type="match status" value="1"/>
</dbReference>
<dbReference type="FunFam" id="3.90.1100.10:FF:000005">
    <property type="entry name" value="DNA-directed RNA polymerase subunit beta"/>
    <property type="match status" value="1"/>
</dbReference>
<dbReference type="FunFam" id="3.90.1800.10:FF:000002">
    <property type="entry name" value="DNA-directed RNA polymerase subunit beta"/>
    <property type="match status" value="1"/>
</dbReference>
<dbReference type="Gene3D" id="2.40.50.150">
    <property type="match status" value="1"/>
</dbReference>
<dbReference type="Gene3D" id="3.90.1070.20">
    <property type="match status" value="1"/>
</dbReference>
<dbReference type="Gene3D" id="3.90.1100.10">
    <property type="match status" value="1"/>
</dbReference>
<dbReference type="Gene3D" id="2.40.270.10">
    <property type="entry name" value="DNA-directed RNA polymerase, subunit 2, domain 6"/>
    <property type="match status" value="1"/>
</dbReference>
<dbReference type="Gene3D" id="3.90.1800.10">
    <property type="entry name" value="RNA polymerase alpha subunit dimerisation domain"/>
    <property type="match status" value="1"/>
</dbReference>
<dbReference type="Gene3D" id="3.90.1110.10">
    <property type="entry name" value="RNA polymerase Rpb2, domain 2"/>
    <property type="match status" value="1"/>
</dbReference>
<dbReference type="InterPro" id="IPR015712">
    <property type="entry name" value="DNA-dir_RNA_pol_su2"/>
</dbReference>
<dbReference type="InterPro" id="IPR007120">
    <property type="entry name" value="DNA-dir_RNAP_su2_dom"/>
</dbReference>
<dbReference type="InterPro" id="IPR037033">
    <property type="entry name" value="DNA-dir_RNAP_su2_hyb_sf"/>
</dbReference>
<dbReference type="InterPro" id="IPR007121">
    <property type="entry name" value="RNA_pol_bsu_CS"/>
</dbReference>
<dbReference type="InterPro" id="IPR007644">
    <property type="entry name" value="RNA_pol_bsu_protrusion"/>
</dbReference>
<dbReference type="InterPro" id="IPR007642">
    <property type="entry name" value="RNA_pol_Rpb2_2"/>
</dbReference>
<dbReference type="InterPro" id="IPR037034">
    <property type="entry name" value="RNA_pol_Rpb2_2_sf"/>
</dbReference>
<dbReference type="InterPro" id="IPR007645">
    <property type="entry name" value="RNA_pol_Rpb2_3"/>
</dbReference>
<dbReference type="InterPro" id="IPR007646">
    <property type="entry name" value="RNA_pol_Rpb2_4"/>
</dbReference>
<dbReference type="InterPro" id="IPR007647">
    <property type="entry name" value="RNA_pol_Rpb2_5"/>
</dbReference>
<dbReference type="InterPro" id="IPR007641">
    <property type="entry name" value="RNA_pol_Rpb2_7"/>
</dbReference>
<dbReference type="InterPro" id="IPR014724">
    <property type="entry name" value="RNA_pol_RPB2_OB-fold"/>
</dbReference>
<dbReference type="NCBIfam" id="NF007175">
    <property type="entry name" value="PRK09606.1"/>
    <property type="match status" value="1"/>
</dbReference>
<dbReference type="PANTHER" id="PTHR20856">
    <property type="entry name" value="DNA-DIRECTED RNA POLYMERASE I SUBUNIT 2"/>
    <property type="match status" value="1"/>
</dbReference>
<dbReference type="Pfam" id="PF04563">
    <property type="entry name" value="RNA_pol_Rpb2_1"/>
    <property type="match status" value="1"/>
</dbReference>
<dbReference type="Pfam" id="PF04561">
    <property type="entry name" value="RNA_pol_Rpb2_2"/>
    <property type="match status" value="1"/>
</dbReference>
<dbReference type="Pfam" id="PF04565">
    <property type="entry name" value="RNA_pol_Rpb2_3"/>
    <property type="match status" value="1"/>
</dbReference>
<dbReference type="Pfam" id="PF04566">
    <property type="entry name" value="RNA_pol_Rpb2_4"/>
    <property type="match status" value="1"/>
</dbReference>
<dbReference type="Pfam" id="PF04567">
    <property type="entry name" value="RNA_pol_Rpb2_5"/>
    <property type="match status" value="1"/>
</dbReference>
<dbReference type="Pfam" id="PF00562">
    <property type="entry name" value="RNA_pol_Rpb2_6"/>
    <property type="match status" value="1"/>
</dbReference>
<dbReference type="Pfam" id="PF04560">
    <property type="entry name" value="RNA_pol_Rpb2_7"/>
    <property type="match status" value="1"/>
</dbReference>
<dbReference type="SUPFAM" id="SSF64484">
    <property type="entry name" value="beta and beta-prime subunits of DNA dependent RNA-polymerase"/>
    <property type="match status" value="1"/>
</dbReference>
<dbReference type="PROSITE" id="PS01166">
    <property type="entry name" value="RNA_POL_BETA"/>
    <property type="match status" value="1"/>
</dbReference>
<evidence type="ECO:0000250" key="1"/>
<evidence type="ECO:0000256" key="2">
    <source>
        <dbReference type="SAM" id="MobiDB-lite"/>
    </source>
</evidence>
<evidence type="ECO:0000305" key="3"/>
<sequence>MSDYMMNDDSQDNPHADISQEDVWTVISAYFQEKGLVRQQLDSFDEFIQNTMQEIIDESPPITLRPESQHHPGQAVVSNNVSTFSVKFGQIYLSKPTAEIDGVSQQVTPNQARIRNLTYSAPLFVDITKTVMTGSKSKGDERRTDEVLKRIFIGKVPIMLRSQYCMLNEADDRDLTTMGECSFDQGGYFIINGSEKVLIAQEKMNNNHVYVFKKSPPSKYSYVAEIRSCQETGSRPTSTMYLKMLHNTNKGPVGIKATVPYIKQDVPVIIVFRALGFVADKDILEHICYDFKDAQMMDLMRPSLEESFVIQSQEVALDYLGKRGSTMGTREQRIKFAREVLQKEMLPHVSVAEFYETKKAFYFGYITHRLLLASLERRPLDDRDHFANKRLDLAGPLLGTLFRQLFKKLTKDVRLYLQRCIDKDKEFIASSAVKSKTITSGLKYSLATGNWGSSKSGGTKSGVAQVLNRLTFASTLSHLRRLNTPIGREGKLAKPRQLHNTHWGIVCPSETPEGQACGLVKNLAMMSYISVGSASQPILEFLEEWTTENLEEISDLSSIFSATKIFVNGMWVGIHHQPDKLLSTLRLLRRCGDVSVEVSVVRDIREKELRLYTDPGRCCRPLFVVQDNKVQIKKQHINKLINNDEYKWQDLLSEGIVEYIDAEEEETVLIAMTPEDLVPMPNEQIVHTYTHCEIHPSMILGICCSIIPFPDHNQSPRNTYQAAMGKQAMGVYITNYQLRMDTMAHVLFYPQKPLVTTRSMEYLHFRELPAGQNVCVAIACYSGYNQEDSVILNQSAIDRGLFRSMFYRAYKDEQKKQTSLMEEVFEKPERDTCAGMRHGSYEKIDDDGLVAPGVRVAGDDIIIGKTTPLPPSDDDLGPKTRRHTKRDSSTALRSSETGIVDQVILTTSGEGFKFCKVRVRSMRVPQIGDKFSSRHGQKGTCGMAYRQEDLPFTVEGIVPDIIVNPHAIPSRMTIGQLIECLLGKVSASTGDEGDATPFTDVTVEAISQALHKIGYQMTGHEVMYNGHTGRRMDAQIFIGPTYYQRLKHMVDDKIHSRSRGPVQILTRQPVEGRSRDGGLRFGEMERDCMISHGAAQFLKERLFDQSDSYRVHICDICGLIAIANLKKNSFECRRCKNKTQISQIRMPYAAKLLFQELMSMSIAPRMFTQT</sequence>
<comment type="function">
    <text evidence="1">DNA-dependent RNA polymerase catalyzes the transcription of DNA into RNA using the four ribonucleoside triphosphates as substrates. Second largest component of RNA polymerase II which synthesizes mRNA precursors and many functional non-coding RNAs. Proposed to contribute to the polymerase catalytic activity and forms the polymerase active center together with the largest subunit. Pol II is the central component of the basal RNA polymerase II transcription machinery. It is composed of mobile elements that move relative to each other. rpb2 is part of the core element with the central large cleft, the clamp element that moves to open and close the cleft and the jaws that are thought to grab the incoming DNA template (By similarity).</text>
</comment>
<comment type="catalytic activity">
    <reaction>
        <text>RNA(n) + a ribonucleoside 5'-triphosphate = RNA(n+1) + diphosphate</text>
        <dbReference type="Rhea" id="RHEA:21248"/>
        <dbReference type="Rhea" id="RHEA-COMP:14527"/>
        <dbReference type="Rhea" id="RHEA-COMP:17342"/>
        <dbReference type="ChEBI" id="CHEBI:33019"/>
        <dbReference type="ChEBI" id="CHEBI:61557"/>
        <dbReference type="ChEBI" id="CHEBI:140395"/>
        <dbReference type="EC" id="2.7.7.6"/>
    </reaction>
</comment>
<comment type="subunit">
    <text evidence="1">Component of the RNA polymerase II (Pol II) complex.</text>
</comment>
<comment type="subcellular location">
    <subcellularLocation>
        <location evidence="1">Nucleus</location>
    </subcellularLocation>
</comment>
<comment type="miscellaneous">
    <text evidence="1">The binding of ribonucleoside triphosphate to the RNA polymerase II transcribing complex probably involves a two-step mechanism. The initial binding seems to occur at the entry (E) site and involves a magnesium ion coordinated by three conserved aspartate residues of the two largest RNA Pol II subunits (By similarity).</text>
</comment>
<comment type="similarity">
    <text evidence="3">Belongs to the RNA polymerase beta chain family.</text>
</comment>
<keyword id="KW-0240">DNA-directed RNA polymerase</keyword>
<keyword id="KW-0460">Magnesium</keyword>
<keyword id="KW-0479">Metal-binding</keyword>
<keyword id="KW-0548">Nucleotidyltransferase</keyword>
<keyword id="KW-0539">Nucleus</keyword>
<keyword id="KW-1185">Reference proteome</keyword>
<keyword id="KW-0804">Transcription</keyword>
<keyword id="KW-0808">Transferase</keyword>
<keyword id="KW-0862">Zinc</keyword>
<keyword id="KW-0863">Zinc-finger</keyword>
<organism>
    <name type="scientific">Dictyostelium discoideum</name>
    <name type="common">Social amoeba</name>
    <dbReference type="NCBI Taxonomy" id="44689"/>
    <lineage>
        <taxon>Eukaryota</taxon>
        <taxon>Amoebozoa</taxon>
        <taxon>Evosea</taxon>
        <taxon>Eumycetozoa</taxon>
        <taxon>Dictyostelia</taxon>
        <taxon>Dictyosteliales</taxon>
        <taxon>Dictyosteliaceae</taxon>
        <taxon>Dictyostelium</taxon>
    </lineage>
</organism>
<feature type="chain" id="PRO_0000328242" description="DNA-directed RNA polymerase II subunit rpb2">
    <location>
        <begin position="1"/>
        <end position="1170"/>
    </location>
</feature>
<feature type="zinc finger region" description="C4-type">
    <location>
        <begin position="1114"/>
        <end position="1135"/>
    </location>
</feature>
<feature type="region of interest" description="Disordered" evidence="2">
    <location>
        <begin position="864"/>
        <end position="893"/>
    </location>
</feature>
<feature type="binding site" evidence="1">
    <location>
        <position position="788"/>
    </location>
    <ligand>
        <name>Mg(2+)</name>
        <dbReference type="ChEBI" id="CHEBI:18420"/>
        <note>ligand shared with RPB1</note>
    </ligand>
</feature>
<feature type="binding site" evidence="1">
    <location>
        <position position="1114"/>
    </location>
    <ligand>
        <name>Zn(2+)</name>
        <dbReference type="ChEBI" id="CHEBI:29105"/>
    </ligand>
</feature>
<feature type="binding site" evidence="1">
    <location>
        <position position="1117"/>
    </location>
    <ligand>
        <name>Zn(2+)</name>
        <dbReference type="ChEBI" id="CHEBI:29105"/>
    </ligand>
</feature>
<feature type="binding site" evidence="1">
    <location>
        <position position="1132"/>
    </location>
    <ligand>
        <name>Zn(2+)</name>
        <dbReference type="ChEBI" id="CHEBI:29105"/>
    </ligand>
</feature>
<feature type="binding site" evidence="1">
    <location>
        <position position="1135"/>
    </location>
    <ligand>
        <name>Zn(2+)</name>
        <dbReference type="ChEBI" id="CHEBI:29105"/>
    </ligand>
</feature>